<reference key="1">
    <citation type="journal article" date="2001" name="Lancet">
        <title>Whole genome sequencing of meticillin-resistant Staphylococcus aureus.</title>
        <authorList>
            <person name="Kuroda M."/>
            <person name="Ohta T."/>
            <person name="Uchiyama I."/>
            <person name="Baba T."/>
            <person name="Yuzawa H."/>
            <person name="Kobayashi I."/>
            <person name="Cui L."/>
            <person name="Oguchi A."/>
            <person name="Aoki K."/>
            <person name="Nagai Y."/>
            <person name="Lian J.-Q."/>
            <person name="Ito T."/>
            <person name="Kanamori M."/>
            <person name="Matsumaru H."/>
            <person name="Maruyama A."/>
            <person name="Murakami H."/>
            <person name="Hosoyama A."/>
            <person name="Mizutani-Ui Y."/>
            <person name="Takahashi N.K."/>
            <person name="Sawano T."/>
            <person name="Inoue R."/>
            <person name="Kaito C."/>
            <person name="Sekimizu K."/>
            <person name="Hirakawa H."/>
            <person name="Kuhara S."/>
            <person name="Goto S."/>
            <person name="Yabuzaki J."/>
            <person name="Kanehisa M."/>
            <person name="Yamashita A."/>
            <person name="Oshima K."/>
            <person name="Furuya K."/>
            <person name="Yoshino C."/>
            <person name="Shiba T."/>
            <person name="Hattori M."/>
            <person name="Ogasawara N."/>
            <person name="Hayashi H."/>
            <person name="Hiramatsu K."/>
        </authorList>
    </citation>
    <scope>NUCLEOTIDE SEQUENCE [LARGE SCALE GENOMIC DNA]</scope>
    <source>
        <strain>N315</strain>
    </source>
</reference>
<gene>
    <name type="primary">icaB</name>
    <name type="ordered locus">SA2461</name>
</gene>
<protein>
    <recommendedName>
        <fullName>Poly-beta-1,6-N-acetyl-D-glucosamine N-deacetylase</fullName>
        <shortName>PNAG N-deacetylase</shortName>
        <shortName>Poly-beta-1,6-GlcNAc N-deacetylase</shortName>
        <ecNumber>3.5.1.-</ecNumber>
    </recommendedName>
    <alternativeName>
        <fullName>Biofilm polysaccharide intercellular adhesin deacetylase</fullName>
        <shortName>Biofilm PIA deacetylase</shortName>
    </alternativeName>
    <alternativeName>
        <fullName>Intercellular adhesion protein B</fullName>
    </alternativeName>
</protein>
<dbReference type="EC" id="3.5.1.-"/>
<dbReference type="EMBL" id="BA000018">
    <property type="protein sequence ID" value="BAB43766.1"/>
    <property type="molecule type" value="Genomic_DNA"/>
</dbReference>
<dbReference type="PIR" id="D90075">
    <property type="entry name" value="D90075"/>
</dbReference>
<dbReference type="RefSeq" id="WP_000877369.1">
    <property type="nucleotide sequence ID" value="NC_002745.2"/>
</dbReference>
<dbReference type="SMR" id="Q7A349"/>
<dbReference type="EnsemblBacteria" id="BAB43766">
    <property type="protein sequence ID" value="BAB43766"/>
    <property type="gene ID" value="BAB43766"/>
</dbReference>
<dbReference type="KEGG" id="sau:SA2461"/>
<dbReference type="HOGENOM" id="CLU_030024_3_2_9"/>
<dbReference type="GO" id="GO:0005576">
    <property type="term" value="C:extracellular region"/>
    <property type="evidence" value="ECO:0007669"/>
    <property type="project" value="UniProtKB-KW"/>
</dbReference>
<dbReference type="GO" id="GO:0016811">
    <property type="term" value="F:hydrolase activity, acting on carbon-nitrogen (but not peptide) bonds, in linear amides"/>
    <property type="evidence" value="ECO:0007669"/>
    <property type="project" value="InterPro"/>
</dbReference>
<dbReference type="GO" id="GO:0005975">
    <property type="term" value="P:carbohydrate metabolic process"/>
    <property type="evidence" value="ECO:0007669"/>
    <property type="project" value="InterPro"/>
</dbReference>
<dbReference type="Gene3D" id="3.20.20.370">
    <property type="entry name" value="Glycoside hydrolase/deacetylase"/>
    <property type="match status" value="1"/>
</dbReference>
<dbReference type="InterPro" id="IPR011330">
    <property type="entry name" value="Glyco_hydro/deAcase_b/a-brl"/>
</dbReference>
<dbReference type="InterPro" id="IPR002509">
    <property type="entry name" value="NODB_dom"/>
</dbReference>
<dbReference type="InterPro" id="IPR023872">
    <property type="entry name" value="PNAG_deacetylase"/>
</dbReference>
<dbReference type="InterPro" id="IPR051398">
    <property type="entry name" value="Polysacch_Deacetylase"/>
</dbReference>
<dbReference type="NCBIfam" id="TIGR03933">
    <property type="entry name" value="PIA_icaB"/>
    <property type="match status" value="1"/>
</dbReference>
<dbReference type="PANTHER" id="PTHR34216">
    <property type="match status" value="1"/>
</dbReference>
<dbReference type="PANTHER" id="PTHR34216:SF3">
    <property type="entry name" value="POLY-BETA-1,6-N-ACETYL-D-GLUCOSAMINE N-DEACETYLASE"/>
    <property type="match status" value="1"/>
</dbReference>
<dbReference type="Pfam" id="PF01522">
    <property type="entry name" value="Polysacc_deac_1"/>
    <property type="match status" value="1"/>
</dbReference>
<dbReference type="SUPFAM" id="SSF88713">
    <property type="entry name" value="Glycoside hydrolase/deacetylase"/>
    <property type="match status" value="1"/>
</dbReference>
<dbReference type="PROSITE" id="PS51677">
    <property type="entry name" value="NODB"/>
    <property type="match status" value="1"/>
</dbReference>
<feature type="signal peptide" evidence="2">
    <location>
        <begin position="1"/>
        <end position="28"/>
    </location>
</feature>
<feature type="chain" id="PRO_0000024836" description="Poly-beta-1,6-N-acetyl-D-glucosamine N-deacetylase">
    <location>
        <begin position="29"/>
        <end position="290"/>
    </location>
</feature>
<feature type="domain" description="NodB homology" evidence="3">
    <location>
        <begin position="114"/>
        <end position="290"/>
    </location>
</feature>
<keyword id="KW-0134">Cell wall</keyword>
<keyword id="KW-0378">Hydrolase</keyword>
<keyword id="KW-0964">Secreted</keyword>
<keyword id="KW-0732">Signal</keyword>
<comment type="function">
    <text evidence="1">Catalyzes the N-deacetylation of poly-beta-1,6-N-acetyl-D-glucosamine (PNAG, also referred to as PIA), a biofilm adhesin polysaccharide. N-deacetylation is crucial for attachment of the polysaccharide to the bacterial cell surface; it leads to the introduction of positive charges in the otherwise neutral PIA polymer, allowing electrostatic interactions (By similarity).</text>
</comment>
<comment type="subcellular location">
    <subcellularLocation>
        <location>Secreted</location>
        <location>Cell wall</location>
    </subcellularLocation>
    <text evidence="1">Attached to the cell surface.</text>
</comment>
<comment type="similarity">
    <text evidence="4">Belongs to the polysaccharide deacetylase family.</text>
</comment>
<organism>
    <name type="scientific">Staphylococcus aureus (strain N315)</name>
    <dbReference type="NCBI Taxonomy" id="158879"/>
    <lineage>
        <taxon>Bacteria</taxon>
        <taxon>Bacillati</taxon>
        <taxon>Bacillota</taxon>
        <taxon>Bacilli</taxon>
        <taxon>Bacillales</taxon>
        <taxon>Staphylococcaceae</taxon>
        <taxon>Staphylococcus</taxon>
    </lineage>
</organism>
<proteinExistence type="inferred from homology"/>
<name>ICAB_STAAN</name>
<accession>Q7A349</accession>
<sequence>MKYRKLIILVLSILIILPVSTLDGHHIANADDDSPKKLKYKENSALALNYHRVRKANFLNNFIYFFSSSKEIKNYSVSQSQFESQIKWLKSHDAKFLTLKEFLYYKKKGKFPKRSVWINFDDMDETIYENAYPILKKYKIPATGFIITGHVGEENFHNLDMISKKELKEMYKTGLWEFETHTHDLHNLSKNNKSKLMKASEATIIKDLNKSEKYLTKNFKKSQKTIAYPYGLMNDDKLPVIKKAGLKYGFSLEEKAVTPNSNDYYIPRILISDDAFEHLIKRWDGFHEKD</sequence>
<evidence type="ECO:0000250" key="1"/>
<evidence type="ECO:0000255" key="2"/>
<evidence type="ECO:0000255" key="3">
    <source>
        <dbReference type="PROSITE-ProRule" id="PRU01014"/>
    </source>
</evidence>
<evidence type="ECO:0000305" key="4"/>